<gene>
    <name type="primary">prtP</name>
    <name type="ordered locus">LACR_C42</name>
</gene>
<geneLocation type="plasmid">
    <name>pSK111</name>
</geneLocation>
<geneLocation type="plasmid">
    <name>pLACR3</name>
</geneLocation>
<accession>P15292</accession>
<accession>Q02VE4</accession>
<dbReference type="EC" id="3.4.21.96"/>
<dbReference type="EMBL" id="J04962">
    <property type="protein sequence ID" value="AAA03533.1"/>
    <property type="status" value="ALT_SEQ"/>
    <property type="molecule type" value="Unassigned_DNA"/>
</dbReference>
<dbReference type="EMBL" id="CP000428">
    <property type="protein sequence ID" value="ABJ74078.1"/>
    <property type="molecule type" value="Genomic_DNA"/>
</dbReference>
<dbReference type="RefSeq" id="WP_011669079.1">
    <property type="nucleotide sequence ID" value="NC_008505.1"/>
</dbReference>
<dbReference type="SMR" id="P15292"/>
<dbReference type="MEROPS" id="S08.019"/>
<dbReference type="MEROPS" id="S08.116"/>
<dbReference type="KEGG" id="llc:LACR_C42"/>
<dbReference type="HOGENOM" id="CLU_001299_0_0_9"/>
<dbReference type="SABIO-RK" id="P15292"/>
<dbReference type="Proteomes" id="UP000000240">
    <property type="component" value="Plasmid pLACR3"/>
</dbReference>
<dbReference type="GO" id="GO:0005576">
    <property type="term" value="C:extracellular region"/>
    <property type="evidence" value="ECO:0007669"/>
    <property type="project" value="UniProtKB-KW"/>
</dbReference>
<dbReference type="GO" id="GO:0016020">
    <property type="term" value="C:membrane"/>
    <property type="evidence" value="ECO:0007669"/>
    <property type="project" value="InterPro"/>
</dbReference>
<dbReference type="GO" id="GO:0004252">
    <property type="term" value="F:serine-type endopeptidase activity"/>
    <property type="evidence" value="ECO:0007669"/>
    <property type="project" value="InterPro"/>
</dbReference>
<dbReference type="GO" id="GO:0006508">
    <property type="term" value="P:proteolysis"/>
    <property type="evidence" value="ECO:0007669"/>
    <property type="project" value="UniProtKB-KW"/>
</dbReference>
<dbReference type="CDD" id="cd07475">
    <property type="entry name" value="Peptidases_S8_C5a_Peptidase"/>
    <property type="match status" value="1"/>
</dbReference>
<dbReference type="Gene3D" id="2.60.40.4070">
    <property type="match status" value="1"/>
</dbReference>
<dbReference type="Gene3D" id="3.50.30.30">
    <property type="match status" value="1"/>
</dbReference>
<dbReference type="Gene3D" id="2.60.40.10">
    <property type="entry name" value="Immunoglobulins"/>
    <property type="match status" value="2"/>
</dbReference>
<dbReference type="Gene3D" id="3.40.50.200">
    <property type="entry name" value="Peptidase S8/S53 domain"/>
    <property type="match status" value="1"/>
</dbReference>
<dbReference type="Gene3D" id="2.60.40.1710">
    <property type="entry name" value="Subtilisin-like superfamily"/>
    <property type="match status" value="1"/>
</dbReference>
<dbReference type="InterPro" id="IPR010435">
    <property type="entry name" value="C5a/SBT2-like_Fn3"/>
</dbReference>
<dbReference type="InterPro" id="IPR034216">
    <property type="entry name" value="C5a_Peptidase"/>
</dbReference>
<dbReference type="InterPro" id="IPR013783">
    <property type="entry name" value="Ig-like_fold"/>
</dbReference>
<dbReference type="InterPro" id="IPR019931">
    <property type="entry name" value="LPXTG_anchor"/>
</dbReference>
<dbReference type="InterPro" id="IPR046450">
    <property type="entry name" value="PA_dom_sf"/>
</dbReference>
<dbReference type="InterPro" id="IPR003137">
    <property type="entry name" value="PA_domain"/>
</dbReference>
<dbReference type="InterPro" id="IPR000209">
    <property type="entry name" value="Peptidase_S8/S53_dom"/>
</dbReference>
<dbReference type="InterPro" id="IPR036852">
    <property type="entry name" value="Peptidase_S8/S53_dom_sf"/>
</dbReference>
<dbReference type="InterPro" id="IPR023827">
    <property type="entry name" value="Peptidase_S8_Asp-AS"/>
</dbReference>
<dbReference type="InterPro" id="IPR022398">
    <property type="entry name" value="Peptidase_S8_His-AS"/>
</dbReference>
<dbReference type="InterPro" id="IPR023828">
    <property type="entry name" value="Peptidase_S8_Ser-AS"/>
</dbReference>
<dbReference type="InterPro" id="IPR050131">
    <property type="entry name" value="Peptidase_S8_subtilisin-like"/>
</dbReference>
<dbReference type="InterPro" id="IPR015500">
    <property type="entry name" value="Peptidase_S8_subtilisin-rel"/>
</dbReference>
<dbReference type="NCBIfam" id="TIGR01167">
    <property type="entry name" value="LPXTG_anchor"/>
    <property type="match status" value="1"/>
</dbReference>
<dbReference type="PANTHER" id="PTHR43806:SF11">
    <property type="entry name" value="CEREVISIN-RELATED"/>
    <property type="match status" value="1"/>
</dbReference>
<dbReference type="PANTHER" id="PTHR43806">
    <property type="entry name" value="PEPTIDASE S8"/>
    <property type="match status" value="1"/>
</dbReference>
<dbReference type="Pfam" id="PF06280">
    <property type="entry name" value="fn3_5"/>
    <property type="match status" value="1"/>
</dbReference>
<dbReference type="Pfam" id="PF09136">
    <property type="entry name" value="Glucodextran_B"/>
    <property type="match status" value="1"/>
</dbReference>
<dbReference type="Pfam" id="PF00746">
    <property type="entry name" value="Gram_pos_anchor"/>
    <property type="match status" value="1"/>
</dbReference>
<dbReference type="Pfam" id="PF02225">
    <property type="entry name" value="PA"/>
    <property type="match status" value="1"/>
</dbReference>
<dbReference type="Pfam" id="PF00082">
    <property type="entry name" value="Peptidase_S8"/>
    <property type="match status" value="1"/>
</dbReference>
<dbReference type="PRINTS" id="PR00723">
    <property type="entry name" value="SUBTILISIN"/>
</dbReference>
<dbReference type="SUPFAM" id="SSF52025">
    <property type="entry name" value="PA domain"/>
    <property type="match status" value="1"/>
</dbReference>
<dbReference type="SUPFAM" id="SSF52743">
    <property type="entry name" value="Subtilisin-like"/>
    <property type="match status" value="1"/>
</dbReference>
<dbReference type="PROSITE" id="PS50847">
    <property type="entry name" value="GRAM_POS_ANCHORING"/>
    <property type="match status" value="1"/>
</dbReference>
<dbReference type="PROSITE" id="PS51892">
    <property type="entry name" value="SUBTILASE"/>
    <property type="match status" value="1"/>
</dbReference>
<dbReference type="PROSITE" id="PS00136">
    <property type="entry name" value="SUBTILASE_ASP"/>
    <property type="match status" value="1"/>
</dbReference>
<dbReference type="PROSITE" id="PS00137">
    <property type="entry name" value="SUBTILASE_HIS"/>
    <property type="match status" value="1"/>
</dbReference>
<dbReference type="PROSITE" id="PS00138">
    <property type="entry name" value="SUBTILASE_SER"/>
    <property type="match status" value="1"/>
</dbReference>
<feature type="signal peptide">
    <location>
        <begin position="1"/>
        <end position="33"/>
    </location>
</feature>
<feature type="propeptide" id="PRO_0000027095" evidence="4">
    <location>
        <begin position="34"/>
        <end position="187"/>
    </location>
</feature>
<feature type="chain" id="PRO_0000027096" description="PIII-type proteinase">
    <location>
        <begin position="188"/>
        <end position="1930"/>
    </location>
</feature>
<feature type="propeptide" id="PRO_0000027097" description="Removed by sortase" evidence="1">
    <location>
        <begin position="1931"/>
        <end position="1962"/>
    </location>
</feature>
<feature type="domain" description="Peptidase S8" evidence="2">
    <location>
        <begin position="191"/>
        <end position="697"/>
    </location>
</feature>
<feature type="region of interest" description="Disordered" evidence="3">
    <location>
        <begin position="1796"/>
        <end position="1938"/>
    </location>
</feature>
<feature type="short sequence motif" description="LPXTG sorting signal" evidence="1">
    <location>
        <begin position="1927"/>
        <end position="1931"/>
    </location>
</feature>
<feature type="compositionally biased region" description="Gly residues" evidence="3">
    <location>
        <begin position="1797"/>
        <end position="1812"/>
    </location>
</feature>
<feature type="compositionally biased region" description="Polar residues" evidence="3">
    <location>
        <begin position="1856"/>
        <end position="1865"/>
    </location>
</feature>
<feature type="compositionally biased region" description="Polar residues" evidence="3">
    <location>
        <begin position="1890"/>
        <end position="1903"/>
    </location>
</feature>
<feature type="active site" description="Charge relay system" evidence="2">
    <location>
        <position position="217"/>
    </location>
</feature>
<feature type="active site" description="Charge relay system" evidence="2">
    <location>
        <position position="281"/>
    </location>
</feature>
<feature type="active site" description="Charge relay system" evidence="2">
    <location>
        <position position="620"/>
    </location>
</feature>
<feature type="modified residue" description="Pentaglycyl murein peptidoglycan amidated threonine" evidence="1">
    <location>
        <position position="1930"/>
    </location>
</feature>
<feature type="sequence conflict" description="In Ref. 1; AAA03533." evidence="5" ref="1">
    <original>T</original>
    <variation>I</variation>
    <location>
        <position position="109"/>
    </location>
</feature>
<feature type="sequence conflict" description="In Ref. 1; AAA03533." evidence="5" ref="1">
    <original>A</original>
    <variation>V</variation>
    <location>
        <position position="249"/>
    </location>
</feature>
<feature type="sequence conflict" description="In Ref. 1; AAA03533." evidence="5" ref="1">
    <original>T</original>
    <variation>K</variation>
    <location>
        <position position="276"/>
    </location>
</feature>
<feature type="sequence conflict" description="In Ref. 1; AAA03533." evidence="5" ref="1">
    <original>T</original>
    <variation>S</variation>
    <location>
        <position position="318"/>
    </location>
</feature>
<feature type="sequence conflict" description="In Ref. 1; AAA03533." evidence="5" ref="1">
    <original>T</original>
    <variation>K</variation>
    <location>
        <position position="325"/>
    </location>
</feature>
<feature type="sequence conflict" description="In Ref. 1; AAA03533." evidence="5" ref="1">
    <original>L</original>
    <variation>V</variation>
    <location>
        <position position="331"/>
    </location>
</feature>
<feature type="sequence conflict" description="In Ref. 1; AAA03533." evidence="5" ref="1">
    <original>D</original>
    <variation>N</variation>
    <location>
        <position position="353"/>
    </location>
</feature>
<feature type="sequence conflict" description="In Ref. 1; AAA03533." evidence="5" ref="1">
    <original>E</original>
    <variation>D</variation>
    <location>
        <position position="899"/>
    </location>
</feature>
<feature type="sequence conflict" description="In Ref. 1; AAA03533." evidence="5" ref="1">
    <original>T</original>
    <variation>M</variation>
    <location>
        <position position="1213"/>
    </location>
</feature>
<feature type="sequence conflict" description="In Ref. 1; AAA03533." evidence="5" ref="1">
    <original>D</original>
    <variation>H</variation>
    <location>
        <position position="1251"/>
    </location>
</feature>
<feature type="sequence conflict" description="In Ref. 1; AAA03533." evidence="5" ref="1">
    <original>E</original>
    <variation>K</variation>
    <location>
        <position position="1282"/>
    </location>
</feature>
<feature type="sequence conflict" description="In Ref. 1; AAA03533." evidence="5" ref="1">
    <original>N</original>
    <variation>K</variation>
    <location>
        <position position="1304"/>
    </location>
</feature>
<feature type="sequence conflict" description="In Ref. 1; AAA03533." evidence="5" ref="1">
    <original>T</original>
    <variation>K</variation>
    <location>
        <position position="1313"/>
    </location>
</feature>
<feature type="sequence conflict" description="In Ref. 1; AAA03533." evidence="5" ref="1">
    <original>ANE</original>
    <variation>TNK</variation>
    <location>
        <begin position="1316"/>
        <end position="1318"/>
    </location>
</feature>
<feature type="sequence conflict" description="In Ref. 1; AAA03533." evidence="5" ref="1">
    <original>T</original>
    <variation>S</variation>
    <location>
        <position position="1394"/>
    </location>
</feature>
<feature type="sequence conflict" description="In Ref. 1; AAA03533." evidence="5" ref="1">
    <original>V</original>
    <variation>E</variation>
    <location>
        <position position="1448"/>
    </location>
</feature>
<feature type="sequence conflict" description="In Ref. 1; AAA03533." evidence="5" ref="1">
    <original>K</original>
    <variation>Q</variation>
    <location>
        <position position="1515"/>
    </location>
</feature>
<feature type="sequence conflict" description="In Ref. 1; AAA03533." evidence="5" ref="1">
    <original>S</original>
    <variation>A</variation>
    <location>
        <position position="1523"/>
    </location>
</feature>
<feature type="sequence conflict" description="In Ref. 1; AAA03533." evidence="5" ref="1">
    <original>V</original>
    <variation>I</variation>
    <location>
        <position position="1550"/>
    </location>
</feature>
<feature type="sequence conflict" description="In Ref. 1; AAA03533." evidence="5" ref="1">
    <original>A</original>
    <variation>D</variation>
    <location>
        <position position="1673"/>
    </location>
</feature>
<feature type="sequence conflict" description="In Ref. 1; AAA03533." evidence="5" ref="1">
    <original>S</original>
    <variation>P</variation>
    <location>
        <position position="1685"/>
    </location>
</feature>
<feature type="sequence conflict" description="In Ref. 1; AAA03533." evidence="5" ref="1">
    <original>V</original>
    <variation>I</variation>
    <location>
        <position position="1719"/>
    </location>
</feature>
<feature type="sequence conflict" description="In Ref. 1; AAA03533." evidence="5" ref="1">
    <original>A</original>
    <variation>E</variation>
    <location>
        <position position="1722"/>
    </location>
</feature>
<feature type="sequence conflict" description="In Ref. 1; AAA03533." evidence="5" ref="1">
    <location>
        <begin position="1859"/>
        <end position="1918"/>
    </location>
</feature>
<name>P3P_LACLS</name>
<reference key="1">
    <citation type="journal article" date="1989" name="J. Biol. Chem.">
        <title>Primary structure and organization of the gene for a procaryotic, cell envelope-located serine proteinase.</title>
        <authorList>
            <person name="Vos P."/>
            <person name="Simons G."/>
            <person name="Siezen R.J."/>
            <person name="de Vos W.M."/>
        </authorList>
    </citation>
    <scope>NUCLEOTIDE SEQUENCE [GENOMIC DNA]</scope>
    <scope>PROTEIN SEQUENCE OF 188-197</scope>
    <source>
        <plasmid>pSK111</plasmid>
    </source>
</reference>
<reference key="2">
    <citation type="journal article" date="2006" name="Proc. Natl. Acad. Sci. U.S.A.">
        <title>Comparative genomics of the lactic acid bacteria.</title>
        <authorList>
            <person name="Makarova K.S."/>
            <person name="Slesarev A."/>
            <person name="Wolf Y.I."/>
            <person name="Sorokin A."/>
            <person name="Mirkin B."/>
            <person name="Koonin E.V."/>
            <person name="Pavlov A."/>
            <person name="Pavlova N."/>
            <person name="Karamychev V."/>
            <person name="Polouchine N."/>
            <person name="Shakhova V."/>
            <person name="Grigoriev I."/>
            <person name="Lou Y."/>
            <person name="Rohksar D."/>
            <person name="Lucas S."/>
            <person name="Huang K."/>
            <person name="Goodstein D.M."/>
            <person name="Hawkins T."/>
            <person name="Plengvidhya V."/>
            <person name="Welker D."/>
            <person name="Hughes J."/>
            <person name="Goh Y."/>
            <person name="Benson A."/>
            <person name="Baldwin K."/>
            <person name="Lee J.-H."/>
            <person name="Diaz-Muniz I."/>
            <person name="Dosti B."/>
            <person name="Smeianov V."/>
            <person name="Wechter W."/>
            <person name="Barabote R."/>
            <person name="Lorca G."/>
            <person name="Altermann E."/>
            <person name="Barrangou R."/>
            <person name="Ganesan B."/>
            <person name="Xie Y."/>
            <person name="Rawsthorne H."/>
            <person name="Tamir D."/>
            <person name="Parker C."/>
            <person name="Breidt F."/>
            <person name="Broadbent J.R."/>
            <person name="Hutkins R."/>
            <person name="O'Sullivan D."/>
            <person name="Steele J."/>
            <person name="Unlu G."/>
            <person name="Saier M.H. Jr."/>
            <person name="Klaenhammer T."/>
            <person name="Richardson P."/>
            <person name="Kozyavkin S."/>
            <person name="Weimer B.C."/>
            <person name="Mills D.A."/>
        </authorList>
    </citation>
    <scope>NUCLEOTIDE SEQUENCE [LARGE SCALE GENOMIC DNA]</scope>
    <source>
        <strain>SK11</strain>
        <plasmid>pLACR3</plasmid>
    </source>
</reference>
<protein>
    <recommendedName>
        <fullName>PIII-type proteinase</fullName>
        <ecNumber>3.4.21.96</ecNumber>
    </recommendedName>
    <alternativeName>
        <fullName>Cell wall-associated serine proteinase</fullName>
    </alternativeName>
    <alternativeName>
        <fullName>Lactocepin</fullName>
    </alternativeName>
</protein>
<comment type="function">
    <text>Protease which breaks down milk proteins during the growth of the bacteria on milk.</text>
</comment>
<comment type="catalytic activity">
    <reaction>
        <text>Endopeptidase activity with very broad specificity, although some subsite preference have been noted, e.g. large hydrophobic residues in the P1 and P4 positions, and Pro in the P2 position. Best known for its action on caseins, although it has been shown to hydrolyze hemoglobin and oxidized insulin B-chain.</text>
        <dbReference type="EC" id="3.4.21.96"/>
    </reaction>
</comment>
<comment type="subcellular location">
    <subcellularLocation>
        <location evidence="1">Secreted</location>
        <location evidence="1">Cell wall</location>
        <topology evidence="1">Peptidoglycan-anchor</topology>
    </subcellularLocation>
</comment>
<comment type="similarity">
    <text evidence="5">Belongs to the peptidase S8 family.</text>
</comment>
<proteinExistence type="evidence at protein level"/>
<evidence type="ECO:0000255" key="1">
    <source>
        <dbReference type="PROSITE-ProRule" id="PRU00477"/>
    </source>
</evidence>
<evidence type="ECO:0000255" key="2">
    <source>
        <dbReference type="PROSITE-ProRule" id="PRU01240"/>
    </source>
</evidence>
<evidence type="ECO:0000256" key="3">
    <source>
        <dbReference type="SAM" id="MobiDB-lite"/>
    </source>
</evidence>
<evidence type="ECO:0000269" key="4">
    <source>
    </source>
</evidence>
<evidence type="ECO:0000305" key="5"/>
<sequence length="1962" mass="205996">MQRKKKGLSILLAGTVALGALAVLPVGEIQAKAAISQQTKGSSLANTVTAATAKQAATDTTAATTNQAIATQLAAKGIDYNKLNKVQQQDIYVDVIVQMSAAPASENGTLRTDYSSTAEIQQETNKVIAAQASVKAAVEQVTQQTAGESYGYVVNGFSTKVRVVDIPKLKQIAGVKTVTLAKVYYPTDAKANSMANVQAVWSNYKYKGEGTVVSVIDSGIDPTHKDMRLSDDKDVKLTKSDVEKFTDTAKHGRYFNSKVPYGFNYADNNDTITDDTVDEQHGMHVAGIIGANGTGDDPAKSVVGVAPEAQLLAMKVFTNSDTSATTGSATLVSAIEDSAKIGADVLNMSLGSDSGNQTLEDPELAAVQNANESGTAAVISAGNSGTSGSATEGVNKDYYGLQDNEMVGSPGTSRGATTVASAENTDVITQAVTITDGTGLQLGPETIQLSSHDFTGSFDQKKFYIVKDASGNLSKGALADYTADAKGKIAIVKRGEFSFDDKQKYAQAAGAAGLIIVNTDGTATPMTSIALTTTFPTFGLSSVTGQKLVDWVTAHPDDSLGVKITLAMLPNQKYTEDKMSDFTSYGPVSNLSFKPDITAPGGNIWSTQNNNGYTNMSGTSMASPFIAGSQALLKQALNNKNNPFYAYYKQLKGTALTDFLKTVEMNTAQPINDINYNNVIVSPRRQGAGLVDVKAAIDALEKNPSTVVAENGYPAVELKDFTSTDKTFKLTFTNRTTHELTYQMDSNTDTNAVYTSATDPNSGVLYDKKIDGAAIKAGSNITVPAGKTAQIEFTLSLPKSFDQQQFVEGFLNFKGSDGSRLNLPYMGFFGDWNDGKIVDSLNGITYSPAGGNFGTVPLLKNKNTGTQYYGGMVTDADGNKTVDDQAIAFSSDKNALYNEISMKYYLLRNISNVQVDILDGQGNKVTTLSSSTNRKKTYYNAHSQQYIYYNAPAWDGTYYDQRDGNIKTADDGSYTYRISGVPEGGDKRQVFDVPFKLDSKAPTVRHVALSAKTENGKTQYYLTAEAKDDLSGLDATKSVKTEINEVTNLDATFTDAGTTADGYTKIETPLSDEQAQALGNGDNSAELYLTDNASNATDQDASVQKPGSTSFDLIVNGGGIPDKISSTTTGYEANTQGGGTYTFSGTYPAAVDGTYTDAQGKKHDLNTTYDAATNSFTASMPVTNADYAAQVDLYADKAHTQLLKHFDTKVRLTAPTFTDLKFNNGSDQTSEATIKVTGTVSADTKTVNVGDTVAALDAQHHFSVDVPVNYGDNTIKVTATDEDGNTTTEQKTITSSYDPDMLKNSVTFDQGVTFGANEFNATSAKFYDPKTGIATITGKVKHPTTTLQVDGKQIPIKDDLTFSFTLDLGTLGQKPFGVVVGDTTQNKTFQEALTFILDAVAPTLSLDSSTDAPVYTNDPNFQITGTATDNAQYLSLSINGSSVASQYVDININSGKPGHMAIDQPVKLLEGKNVLTVAVTDSEDNTTTKNITVYYEPKKTLAAPTVTPSTTEPAKTVTLTANSAATGETVQYSADGGKTYQDVPAAGVTVTANGTFKFKSTDLYGNESPAVDYVVTNIKADDPAQLQAAKQELTNLIASAKTLSASGKYDDATTTALAAATQKAQTALDQTNASVDSLTGANRDLQTAINQLAAKLPADKKTSLLNQLQSVKAALGTDLGNQTDSSTGKTFTAALDDLVAQAQAGTQTDDQLQATLAKVLDAVLAKLAEGIKAATPAEVGNAKDAATGKTWYADIADTLTSGQASADASDKLAHLQALQSLKTKVAAAVEAAKTVGKGDGTTGTSDKGGGQGTPAPAPGDTGKDKGDEGSQPSSGGNIPTKPATTTSTTTDDTTDRNGQLTSGTSDKGGGQGTPAPAPGDIGKDKGDEGSQPSSGGNIPTNPATTTSTTTDDTTDRNGQLTSGKGALPKTGETTERPAFGFLGVIVVSLMGVLGLKRKQREE</sequence>
<organism>
    <name type="scientific">Lactococcus lactis subsp. cremoris (strain SK11)</name>
    <dbReference type="NCBI Taxonomy" id="272622"/>
    <lineage>
        <taxon>Bacteria</taxon>
        <taxon>Bacillati</taxon>
        <taxon>Bacillota</taxon>
        <taxon>Bacilli</taxon>
        <taxon>Lactobacillales</taxon>
        <taxon>Streptococcaceae</taxon>
        <taxon>Lactococcus</taxon>
        <taxon>Lactococcus cremoris subsp. cremoris</taxon>
    </lineage>
</organism>
<keyword id="KW-0134">Cell wall</keyword>
<keyword id="KW-0903">Direct protein sequencing</keyword>
<keyword id="KW-0378">Hydrolase</keyword>
<keyword id="KW-0572">Peptidoglycan-anchor</keyword>
<keyword id="KW-0614">Plasmid</keyword>
<keyword id="KW-0645">Protease</keyword>
<keyword id="KW-0677">Repeat</keyword>
<keyword id="KW-0964">Secreted</keyword>
<keyword id="KW-0720">Serine protease</keyword>
<keyword id="KW-0732">Signal</keyword>
<keyword id="KW-0865">Zymogen</keyword>